<sequence length="267" mass="30305">MFIVSDGTGITAETFSHSILAQFEMRFRKVRMPFVDTPEKAHIAVGKINEAFHNEGVPPIVFTTLVNQEANKALRRAKAMILDMFQTFIEPLEKELGLKSTHAIGRFHQNADTEAYKNRIEAINFSLAHDDGQSHKNLEEADVILVGVSRSGKTPTSLYLAMQYGLKAANYPLIPDDFERGRLPSALYAFKPKIFGLSIDPQRLTEIRNERRPGSKYAALENCRYEVNEAEAMMRREGIKWLSSTHKSIEEIATTILQEIKVDRDNY</sequence>
<reference key="1">
    <citation type="journal article" date="2006" name="Nat. Biotechnol.">
        <title>Genome sequence of the bioplastic-producing 'Knallgas' bacterium Ralstonia eutropha H16.</title>
        <authorList>
            <person name="Pohlmann A."/>
            <person name="Fricke W.F."/>
            <person name="Reinecke F."/>
            <person name="Kusian B."/>
            <person name="Liesegang H."/>
            <person name="Cramm R."/>
            <person name="Eitinger T."/>
            <person name="Ewering C."/>
            <person name="Poetter M."/>
            <person name="Schwartz E."/>
            <person name="Strittmatter A."/>
            <person name="Voss I."/>
            <person name="Gottschalk G."/>
            <person name="Steinbuechel A."/>
            <person name="Friedrich B."/>
            <person name="Bowien B."/>
        </authorList>
    </citation>
    <scope>NUCLEOTIDE SEQUENCE [LARGE SCALE GENOMIC DNA]</scope>
    <source>
        <strain>ATCC 17699 / DSM 428 / KCTC 22496 / NCIMB 10442 / H16 / Stanier 337</strain>
    </source>
</reference>
<accession>Q0KA32</accession>
<organism>
    <name type="scientific">Cupriavidus necator (strain ATCC 17699 / DSM 428 / KCTC 22496 / NCIMB 10442 / H16 / Stanier 337)</name>
    <name type="common">Ralstonia eutropha</name>
    <dbReference type="NCBI Taxonomy" id="381666"/>
    <lineage>
        <taxon>Bacteria</taxon>
        <taxon>Pseudomonadati</taxon>
        <taxon>Pseudomonadota</taxon>
        <taxon>Betaproteobacteria</taxon>
        <taxon>Burkholderiales</taxon>
        <taxon>Burkholderiaceae</taxon>
        <taxon>Cupriavidus</taxon>
    </lineage>
</organism>
<protein>
    <recommendedName>
        <fullName evidence="1">Putative phosphoenolpyruvate synthase regulatory protein</fullName>
        <shortName evidence="1">PEP synthase regulatory protein</shortName>
        <shortName evidence="1">PSRP</shortName>
        <ecNumber evidence="1">2.7.11.33</ecNumber>
        <ecNumber evidence="1">2.7.4.28</ecNumber>
    </recommendedName>
    <alternativeName>
        <fullName evidence="1">Pyruvate, water dikinase regulatory protein</fullName>
    </alternativeName>
</protein>
<evidence type="ECO:0000255" key="1">
    <source>
        <dbReference type="HAMAP-Rule" id="MF_01062"/>
    </source>
</evidence>
<gene>
    <name type="ordered locus">H16_A2039</name>
</gene>
<dbReference type="EC" id="2.7.11.33" evidence="1"/>
<dbReference type="EC" id="2.7.4.28" evidence="1"/>
<dbReference type="EMBL" id="AM260479">
    <property type="protein sequence ID" value="CAJ93139.1"/>
    <property type="molecule type" value="Genomic_DNA"/>
</dbReference>
<dbReference type="SMR" id="Q0KA32"/>
<dbReference type="STRING" id="381666.H16_A2039"/>
<dbReference type="KEGG" id="reh:H16_A2039"/>
<dbReference type="eggNOG" id="COG1806">
    <property type="taxonomic scope" value="Bacteria"/>
</dbReference>
<dbReference type="HOGENOM" id="CLU_046206_1_0_4"/>
<dbReference type="OrthoDB" id="9782201at2"/>
<dbReference type="Proteomes" id="UP000008210">
    <property type="component" value="Chromosome 1"/>
</dbReference>
<dbReference type="GO" id="GO:0043531">
    <property type="term" value="F:ADP binding"/>
    <property type="evidence" value="ECO:0007669"/>
    <property type="project" value="UniProtKB-UniRule"/>
</dbReference>
<dbReference type="GO" id="GO:0005524">
    <property type="term" value="F:ATP binding"/>
    <property type="evidence" value="ECO:0007669"/>
    <property type="project" value="InterPro"/>
</dbReference>
<dbReference type="GO" id="GO:0016776">
    <property type="term" value="F:phosphotransferase activity, phosphate group as acceptor"/>
    <property type="evidence" value="ECO:0007669"/>
    <property type="project" value="UniProtKB-UniRule"/>
</dbReference>
<dbReference type="GO" id="GO:0004674">
    <property type="term" value="F:protein serine/threonine kinase activity"/>
    <property type="evidence" value="ECO:0007669"/>
    <property type="project" value="UniProtKB-UniRule"/>
</dbReference>
<dbReference type="HAMAP" id="MF_01062">
    <property type="entry name" value="PSRP"/>
    <property type="match status" value="1"/>
</dbReference>
<dbReference type="InterPro" id="IPR005177">
    <property type="entry name" value="Kinase-pyrophosphorylase"/>
</dbReference>
<dbReference type="InterPro" id="IPR026530">
    <property type="entry name" value="PSRP"/>
</dbReference>
<dbReference type="NCBIfam" id="NF003742">
    <property type="entry name" value="PRK05339.1"/>
    <property type="match status" value="1"/>
</dbReference>
<dbReference type="PANTHER" id="PTHR31756">
    <property type="entry name" value="PYRUVATE, PHOSPHATE DIKINASE REGULATORY PROTEIN 1, CHLOROPLASTIC"/>
    <property type="match status" value="1"/>
</dbReference>
<dbReference type="PANTHER" id="PTHR31756:SF3">
    <property type="entry name" value="PYRUVATE, PHOSPHATE DIKINASE REGULATORY PROTEIN 1, CHLOROPLASTIC"/>
    <property type="match status" value="1"/>
</dbReference>
<dbReference type="Pfam" id="PF03618">
    <property type="entry name" value="Kinase-PPPase"/>
    <property type="match status" value="1"/>
</dbReference>
<proteinExistence type="inferred from homology"/>
<name>PSRP_CUPNH</name>
<comment type="function">
    <text evidence="1">Bifunctional serine/threonine kinase and phosphorylase involved in the regulation of the phosphoenolpyruvate synthase (PEPS) by catalyzing its phosphorylation/dephosphorylation.</text>
</comment>
<comment type="catalytic activity">
    <reaction evidence="1">
        <text>[pyruvate, water dikinase] + ADP = [pyruvate, water dikinase]-phosphate + AMP + H(+)</text>
        <dbReference type="Rhea" id="RHEA:46020"/>
        <dbReference type="Rhea" id="RHEA-COMP:11425"/>
        <dbReference type="Rhea" id="RHEA-COMP:11426"/>
        <dbReference type="ChEBI" id="CHEBI:15378"/>
        <dbReference type="ChEBI" id="CHEBI:43176"/>
        <dbReference type="ChEBI" id="CHEBI:68546"/>
        <dbReference type="ChEBI" id="CHEBI:456215"/>
        <dbReference type="ChEBI" id="CHEBI:456216"/>
        <dbReference type="EC" id="2.7.11.33"/>
    </reaction>
</comment>
<comment type="catalytic activity">
    <reaction evidence="1">
        <text>[pyruvate, water dikinase]-phosphate + phosphate + H(+) = [pyruvate, water dikinase] + diphosphate</text>
        <dbReference type="Rhea" id="RHEA:48580"/>
        <dbReference type="Rhea" id="RHEA-COMP:11425"/>
        <dbReference type="Rhea" id="RHEA-COMP:11426"/>
        <dbReference type="ChEBI" id="CHEBI:15378"/>
        <dbReference type="ChEBI" id="CHEBI:33019"/>
        <dbReference type="ChEBI" id="CHEBI:43176"/>
        <dbReference type="ChEBI" id="CHEBI:43474"/>
        <dbReference type="ChEBI" id="CHEBI:68546"/>
        <dbReference type="EC" id="2.7.4.28"/>
    </reaction>
</comment>
<comment type="similarity">
    <text evidence="1">Belongs to the pyruvate, phosphate/water dikinase regulatory protein family. PSRP subfamily.</text>
</comment>
<keyword id="KW-0418">Kinase</keyword>
<keyword id="KW-0547">Nucleotide-binding</keyword>
<keyword id="KW-1185">Reference proteome</keyword>
<keyword id="KW-0723">Serine/threonine-protein kinase</keyword>
<keyword id="KW-0808">Transferase</keyword>
<feature type="chain" id="PRO_0000316720" description="Putative phosphoenolpyruvate synthase regulatory protein">
    <location>
        <begin position="1"/>
        <end position="267"/>
    </location>
</feature>
<feature type="binding site" evidence="1">
    <location>
        <begin position="147"/>
        <end position="154"/>
    </location>
    <ligand>
        <name>ADP</name>
        <dbReference type="ChEBI" id="CHEBI:456216"/>
    </ligand>
</feature>